<feature type="chain" id="PRO_0000209026" description="Putative potassium transport system protein Kup 1">
    <location>
        <begin position="1"/>
        <end position="673"/>
    </location>
</feature>
<feature type="transmembrane region" description="Helical" evidence="1">
    <location>
        <begin position="14"/>
        <end position="34"/>
    </location>
</feature>
<feature type="transmembrane region" description="Helical" evidence="1">
    <location>
        <begin position="58"/>
        <end position="78"/>
    </location>
</feature>
<feature type="transmembrane region" description="Helical" evidence="1">
    <location>
        <begin position="101"/>
        <end position="121"/>
    </location>
</feature>
<feature type="transmembrane region" description="Helical" evidence="1">
    <location>
        <begin position="147"/>
        <end position="167"/>
    </location>
</feature>
<feature type="transmembrane region" description="Helical" evidence="1">
    <location>
        <begin position="175"/>
        <end position="195"/>
    </location>
</feature>
<feature type="transmembrane region" description="Helical" evidence="1">
    <location>
        <begin position="196"/>
        <end position="216"/>
    </location>
</feature>
<feature type="transmembrane region" description="Helical" evidence="1">
    <location>
        <begin position="220"/>
        <end position="240"/>
    </location>
</feature>
<feature type="transmembrane region" description="Helical" evidence="1">
    <location>
        <begin position="252"/>
        <end position="272"/>
    </location>
</feature>
<feature type="transmembrane region" description="Helical" evidence="1">
    <location>
        <begin position="294"/>
        <end position="314"/>
    </location>
</feature>
<feature type="transmembrane region" description="Helical" evidence="1">
    <location>
        <begin position="345"/>
        <end position="365"/>
    </location>
</feature>
<feature type="transmembrane region" description="Helical" evidence="1">
    <location>
        <begin position="374"/>
        <end position="394"/>
    </location>
</feature>
<feature type="transmembrane region" description="Helical" evidence="1">
    <location>
        <begin position="403"/>
        <end position="423"/>
    </location>
</feature>
<feature type="transmembrane region" description="Helical" evidence="1">
    <location>
        <begin position="427"/>
        <end position="447"/>
    </location>
</feature>
<dbReference type="EMBL" id="AM406671">
    <property type="status" value="NOT_ANNOTATED_CDS"/>
    <property type="molecule type" value="Genomic_DNA"/>
</dbReference>
<dbReference type="EMBL" id="U74322">
    <property type="protein sequence ID" value="AAC12805.1"/>
    <property type="molecule type" value="Genomic_DNA"/>
</dbReference>
<dbReference type="Proteomes" id="UP000000364">
    <property type="component" value="Chromosome"/>
</dbReference>
<dbReference type="GO" id="GO:0005886">
    <property type="term" value="C:plasma membrane"/>
    <property type="evidence" value="ECO:0007669"/>
    <property type="project" value="UniProtKB-SubCell"/>
</dbReference>
<dbReference type="GO" id="GO:0015079">
    <property type="term" value="F:potassium ion transmembrane transporter activity"/>
    <property type="evidence" value="ECO:0007669"/>
    <property type="project" value="UniProtKB-UniRule"/>
</dbReference>
<dbReference type="GO" id="GO:0015293">
    <property type="term" value="F:symporter activity"/>
    <property type="evidence" value="ECO:0007669"/>
    <property type="project" value="UniProtKB-UniRule"/>
</dbReference>
<dbReference type="HAMAP" id="MF_01522">
    <property type="entry name" value="Kup"/>
    <property type="match status" value="1"/>
</dbReference>
<dbReference type="InterPro" id="IPR003855">
    <property type="entry name" value="K+_transporter"/>
</dbReference>
<dbReference type="InterPro" id="IPR053952">
    <property type="entry name" value="K_trans_C"/>
</dbReference>
<dbReference type="InterPro" id="IPR053951">
    <property type="entry name" value="K_trans_N"/>
</dbReference>
<dbReference type="InterPro" id="IPR023051">
    <property type="entry name" value="Kup"/>
</dbReference>
<dbReference type="PANTHER" id="PTHR30540:SF83">
    <property type="entry name" value="K+ POTASSIUM TRANSPORTER"/>
    <property type="match status" value="1"/>
</dbReference>
<dbReference type="PANTHER" id="PTHR30540">
    <property type="entry name" value="OSMOTIC STRESS POTASSIUM TRANSPORTER"/>
    <property type="match status" value="1"/>
</dbReference>
<dbReference type="Pfam" id="PF02705">
    <property type="entry name" value="K_trans"/>
    <property type="match status" value="1"/>
</dbReference>
<dbReference type="Pfam" id="PF22776">
    <property type="entry name" value="K_trans_C"/>
    <property type="match status" value="1"/>
</dbReference>
<accession>P96790</accession>
<keyword id="KW-1003">Cell membrane</keyword>
<keyword id="KW-0406">Ion transport</keyword>
<keyword id="KW-0472">Membrane</keyword>
<keyword id="KW-0630">Potassium</keyword>
<keyword id="KW-0633">Potassium transport</keyword>
<keyword id="KW-0769">Symport</keyword>
<keyword id="KW-0812">Transmembrane</keyword>
<keyword id="KW-1133">Transmembrane helix</keyword>
<keyword id="KW-0813">Transport</keyword>
<protein>
    <recommendedName>
        <fullName>Putative potassium transport system protein Kup 1</fullName>
    </recommendedName>
</protein>
<sequence length="673" mass="75343">MGYQHNRSFNKATGAGFIIAMGIVYGDIGTSPLYTMESIVQGQGGLERISETSIIGALSLIIWTLTLITTVKYVWIALKADNNHEGGVFSLFTLVRKYAKWLIIPAMIGGAALLSDGALTPAVTVTSAIEGLRSIPAFHEAFGQQQLPIVIITLAILAILFLIQRFGTSIVGKVFGPVMFIWFSFLGITGLINLFGDFSVLQAINPYWAIHLLLSPENKAGIFVLGSVFLATTGAEALYSDLGHVGRGNIHVSWPFVKVCIILSYCGQAAWLLQNRGKSLGDINPFFAVLPQSLIIFSVVLATLAAIIASQALISGSFTLVSEAIRLKLLPRLKINYPGETFGQLYIPAVNLGLWLAASFIVVYFQSSAHMEAAYGLAITVTMLMTTILLTVYLAQHQKVKKVFVVLFFGAFIFIEGLFFAASAVKFLHGGYVVVILAALILFVMAIWHKSDQLFYKYLKSSNLNDYKEQMNKLRKDESYDLYHTNVVYLTAKMDKEWIDRSILYSILDKRPKKAEVYWFVKVNVTDEPYTSEYEVDMLGTDFIVCVNLYLGFHMRQEIPRYLRTIVTNLMESGRLPQQHQPYSIIPGRKVGDFRFILLEEKLINARQMPAFERFVLQTKEQIKKITASPARWFGLHFSEVTVETVPLVLSDVRNLEIHERISKENEVENLSK</sequence>
<gene>
    <name evidence="1" type="primary">kup1</name>
    <name type="synonym">kupA</name>
    <name type="ordered locus">llmg_0587</name>
</gene>
<evidence type="ECO:0000255" key="1">
    <source>
        <dbReference type="HAMAP-Rule" id="MF_01522"/>
    </source>
</evidence>
<evidence type="ECO:0000305" key="2"/>
<reference key="1">
    <citation type="journal article" date="2007" name="J. Bacteriol.">
        <title>The complete genome sequence of the lactic acid bacterial paradigm Lactococcus lactis subsp. cremoris MG1363.</title>
        <authorList>
            <person name="Wegmann U."/>
            <person name="O'Connell-Motherway M."/>
            <person name="Zomer A."/>
            <person name="Buist G."/>
            <person name="Shearman C."/>
            <person name="Canchaya C."/>
            <person name="Ventura M."/>
            <person name="Goesmann A."/>
            <person name="Gasson M.J."/>
            <person name="Kuipers O.P."/>
            <person name="van Sinderen D."/>
            <person name="Kok J."/>
        </authorList>
    </citation>
    <scope>NUCLEOTIDE SEQUENCE [LARGE SCALE GENOMIC DNA]</scope>
    <source>
        <strain>MG1363</strain>
    </source>
</reference>
<reference key="2">
    <citation type="journal article" date="1999" name="Biochem. J.">
        <title>6-phosphogluconate dehydrogenase from Lactococcus lactis: a role for arginine residues in binding substrate and coenzyme.</title>
        <authorList>
            <person name="Tetaud E."/>
            <person name="Hanau S."/>
            <person name="Wells J.M."/>
            <person name="Le Page R.W.F."/>
            <person name="Adams M.J."/>
            <person name="Arkison S."/>
            <person name="Barrett M.P."/>
        </authorList>
    </citation>
    <scope>NUCLEOTIDE SEQUENCE [GENOMIC DNA] OF 1-170</scope>
</reference>
<name>KUP1_LACLM</name>
<comment type="function">
    <text evidence="1">Transport of potassium into the cell. Likely operates as a K(+):H(+) symporter.</text>
</comment>
<comment type="catalytic activity">
    <reaction evidence="1">
        <text>K(+)(in) + H(+)(in) = K(+)(out) + H(+)(out)</text>
        <dbReference type="Rhea" id="RHEA:28490"/>
        <dbReference type="ChEBI" id="CHEBI:15378"/>
        <dbReference type="ChEBI" id="CHEBI:29103"/>
    </reaction>
    <physiologicalReaction direction="right-to-left" evidence="1">
        <dbReference type="Rhea" id="RHEA:28492"/>
    </physiologicalReaction>
</comment>
<comment type="subcellular location">
    <subcellularLocation>
        <location evidence="1">Cell membrane</location>
        <topology evidence="1">Multi-pass membrane protein</topology>
    </subcellularLocation>
</comment>
<comment type="similarity">
    <text evidence="1">Belongs to the HAK/KUP transporter (TC 2.A.72) family.</text>
</comment>
<comment type="caution">
    <text evidence="2">Could be the product of a pseudogene.</text>
</comment>
<comment type="sequence caution" evidence="2">
    <conflict type="erroneous termination">
        <sequence resource="EMBL" id="AM406671"/>
    </conflict>
    <text>Truncated C-terminus.</text>
</comment>
<organism>
    <name type="scientific">Lactococcus lactis subsp. cremoris (strain MG1363)</name>
    <dbReference type="NCBI Taxonomy" id="416870"/>
    <lineage>
        <taxon>Bacteria</taxon>
        <taxon>Bacillati</taxon>
        <taxon>Bacillota</taxon>
        <taxon>Bacilli</taxon>
        <taxon>Lactobacillales</taxon>
        <taxon>Streptococcaceae</taxon>
        <taxon>Lactococcus</taxon>
        <taxon>Lactococcus cremoris subsp. cremoris</taxon>
    </lineage>
</organism>
<proteinExistence type="uncertain"/>